<proteinExistence type="inferred from homology"/>
<feature type="chain" id="PRO_0000380721" description="Putrescine carbamoyltransferase">
    <location>
        <begin position="1"/>
        <end position="365"/>
    </location>
</feature>
<feature type="binding site" evidence="1">
    <location>
        <begin position="54"/>
        <end position="58"/>
    </location>
    <ligand>
        <name>carbamoyl phosphate</name>
        <dbReference type="ChEBI" id="CHEBI:58228"/>
    </ligand>
</feature>
<feature type="binding site" evidence="1">
    <location>
        <position position="105"/>
    </location>
    <ligand>
        <name>carbamoyl phosphate</name>
        <dbReference type="ChEBI" id="CHEBI:58228"/>
    </ligand>
</feature>
<feature type="binding site" evidence="1">
    <location>
        <position position="132"/>
    </location>
    <ligand>
        <name>carbamoyl phosphate</name>
        <dbReference type="ChEBI" id="CHEBI:58228"/>
    </ligand>
</feature>
<feature type="binding site" evidence="1">
    <location>
        <begin position="277"/>
        <end position="280"/>
    </location>
    <ligand>
        <name>putrescine</name>
        <dbReference type="ChEBI" id="CHEBI:326268"/>
    </ligand>
</feature>
<feature type="site" description="Important for structural integrity" evidence="1">
    <location>
        <position position="29"/>
    </location>
</feature>
<feature type="site" description="Important for structural integrity" evidence="1">
    <location>
        <position position="145"/>
    </location>
</feature>
<dbReference type="EC" id="2.1.3.6" evidence="1"/>
<dbReference type="EMBL" id="CP000123">
    <property type="protein sequence ID" value="ABC01353.1"/>
    <property type="molecule type" value="Genomic_DNA"/>
</dbReference>
<dbReference type="RefSeq" id="WP_011387515.1">
    <property type="nucleotide sequence ID" value="NC_007633.1"/>
</dbReference>
<dbReference type="SMR" id="Q2SRJ4"/>
<dbReference type="GeneID" id="23778391"/>
<dbReference type="KEGG" id="mcp:MCAP_0654"/>
<dbReference type="HOGENOM" id="CLU_043846_3_1_14"/>
<dbReference type="PhylomeDB" id="Q2SRJ4"/>
<dbReference type="UniPathway" id="UPA00534">
    <property type="reaction ID" value="UER00941"/>
</dbReference>
<dbReference type="Proteomes" id="UP000001928">
    <property type="component" value="Chromosome"/>
</dbReference>
<dbReference type="GO" id="GO:0005737">
    <property type="term" value="C:cytoplasm"/>
    <property type="evidence" value="ECO:0007669"/>
    <property type="project" value="UniProtKB-SubCell"/>
</dbReference>
<dbReference type="GO" id="GO:0016597">
    <property type="term" value="F:amino acid binding"/>
    <property type="evidence" value="ECO:0007669"/>
    <property type="project" value="InterPro"/>
</dbReference>
<dbReference type="GO" id="GO:0004585">
    <property type="term" value="F:ornithine carbamoyltransferase activity"/>
    <property type="evidence" value="ECO:0007669"/>
    <property type="project" value="UniProtKB-ARBA"/>
</dbReference>
<dbReference type="GO" id="GO:0050231">
    <property type="term" value="F:putrescine carbamoyltransferase activity"/>
    <property type="evidence" value="ECO:0007669"/>
    <property type="project" value="UniProtKB-UniRule"/>
</dbReference>
<dbReference type="GO" id="GO:0042450">
    <property type="term" value="P:arginine biosynthetic process via ornithine"/>
    <property type="evidence" value="ECO:0007669"/>
    <property type="project" value="TreeGrafter"/>
</dbReference>
<dbReference type="GO" id="GO:0019240">
    <property type="term" value="P:citrulline biosynthetic process"/>
    <property type="evidence" value="ECO:0007669"/>
    <property type="project" value="TreeGrafter"/>
</dbReference>
<dbReference type="GO" id="GO:0033390">
    <property type="term" value="P:putrescine biosynthetic process from arginine via N-carbamoylputrescine"/>
    <property type="evidence" value="ECO:0007669"/>
    <property type="project" value="UniProtKB-UniRule"/>
</dbReference>
<dbReference type="FunFam" id="3.40.50.1370:FF:000008">
    <property type="entry name" value="Ornithine carbamoyltransferase"/>
    <property type="match status" value="1"/>
</dbReference>
<dbReference type="Gene3D" id="3.40.50.1370">
    <property type="entry name" value="Aspartate/ornithine carbamoyltransferase"/>
    <property type="match status" value="2"/>
</dbReference>
<dbReference type="HAMAP" id="MF_02102">
    <property type="entry name" value="PTCase"/>
    <property type="match status" value="1"/>
</dbReference>
<dbReference type="InterPro" id="IPR006132">
    <property type="entry name" value="Asp/Orn_carbamoyltranf_P-bd"/>
</dbReference>
<dbReference type="InterPro" id="IPR006130">
    <property type="entry name" value="Asp/Orn_carbamoylTrfase"/>
</dbReference>
<dbReference type="InterPro" id="IPR036901">
    <property type="entry name" value="Asp/Orn_carbamoylTrfase_sf"/>
</dbReference>
<dbReference type="InterPro" id="IPR006131">
    <property type="entry name" value="Asp_carbamoyltransf_Asp/Orn-bd"/>
</dbReference>
<dbReference type="InterPro" id="IPR002292">
    <property type="entry name" value="Orn/put_carbamltrans"/>
</dbReference>
<dbReference type="InterPro" id="IPR024903">
    <property type="entry name" value="PtcA"/>
</dbReference>
<dbReference type="NCBIfam" id="TIGR00658">
    <property type="entry name" value="orni_carb_tr"/>
    <property type="match status" value="1"/>
</dbReference>
<dbReference type="NCBIfam" id="NF001986">
    <property type="entry name" value="PRK00779.1"/>
    <property type="match status" value="1"/>
</dbReference>
<dbReference type="NCBIfam" id="TIGR04384">
    <property type="entry name" value="putr_carbamoyl"/>
    <property type="match status" value="1"/>
</dbReference>
<dbReference type="PANTHER" id="PTHR45753">
    <property type="entry name" value="ORNITHINE CARBAMOYLTRANSFERASE, MITOCHONDRIAL"/>
    <property type="match status" value="1"/>
</dbReference>
<dbReference type="PANTHER" id="PTHR45753:SF3">
    <property type="entry name" value="ORNITHINE TRANSCARBAMYLASE, MITOCHONDRIAL"/>
    <property type="match status" value="1"/>
</dbReference>
<dbReference type="Pfam" id="PF00185">
    <property type="entry name" value="OTCace"/>
    <property type="match status" value="1"/>
</dbReference>
<dbReference type="Pfam" id="PF02729">
    <property type="entry name" value="OTCace_N"/>
    <property type="match status" value="1"/>
</dbReference>
<dbReference type="PRINTS" id="PR00100">
    <property type="entry name" value="AOTCASE"/>
</dbReference>
<dbReference type="PRINTS" id="PR00102">
    <property type="entry name" value="OTCASE"/>
</dbReference>
<dbReference type="SUPFAM" id="SSF53671">
    <property type="entry name" value="Aspartate/ornithine carbamoyltransferase"/>
    <property type="match status" value="1"/>
</dbReference>
<dbReference type="PROSITE" id="PS00097">
    <property type="entry name" value="CARBAMOYLTRANSFERASE"/>
    <property type="match status" value="1"/>
</dbReference>
<organism>
    <name type="scientific">Mycoplasma capricolum subsp. capricolum (strain California kid / ATCC 27343 / NCTC 10154)</name>
    <dbReference type="NCBI Taxonomy" id="340047"/>
    <lineage>
        <taxon>Bacteria</taxon>
        <taxon>Bacillati</taxon>
        <taxon>Mycoplasmatota</taxon>
        <taxon>Mollicutes</taxon>
        <taxon>Mycoplasmataceae</taxon>
        <taxon>Mycoplasma</taxon>
    </lineage>
</organism>
<name>PTC_MYCCT</name>
<comment type="function">
    <text evidence="1">Catalyzes the phosphorolysis of N-carbamoylputrescine to form carbamoyl phosphate and putrescine. Is involved in the degradation pathway of the polyamine agmatine.</text>
</comment>
<comment type="catalytic activity">
    <reaction evidence="1">
        <text>carbamoyl phosphate + putrescine = N-carbamoylputrescine + phosphate + H(+)</text>
        <dbReference type="Rhea" id="RHEA:21936"/>
        <dbReference type="ChEBI" id="CHEBI:15378"/>
        <dbReference type="ChEBI" id="CHEBI:43474"/>
        <dbReference type="ChEBI" id="CHEBI:58228"/>
        <dbReference type="ChEBI" id="CHEBI:58318"/>
        <dbReference type="ChEBI" id="CHEBI:326268"/>
        <dbReference type="EC" id="2.1.3.6"/>
    </reaction>
</comment>
<comment type="pathway">
    <text evidence="1">Amine and polyamine biosynthesis; putrescine biosynthesis via agmatine pathway; putrescine from N-carbamoylputrescine (transferase route): step 1/1.</text>
</comment>
<comment type="subunit">
    <text evidence="1">Homotrimer.</text>
</comment>
<comment type="subcellular location">
    <subcellularLocation>
        <location evidence="1">Cytoplasm</location>
    </subcellularLocation>
</comment>
<comment type="similarity">
    <text evidence="1">Belongs to the aspartate/ornithine carbamoyltransferase superfamily. PTCase family.</text>
</comment>
<accession>Q2SRJ4</accession>
<sequence length="365" mass="42318">MNKVRHFIDTQDLSKKEIFEIFRLMKMLKEARYCGAVPELLKNKTLAMIFEEPSTRTRVSFEAAMTLLGGHAQYLKPGELHLGVRESLYDTTKVLSHMCDGIMCRALKHETVLNLAKYADVPVLNGLTDYNHPTQAICDVFTMLEYMPATKNLEYEDIKFEDIKVVFIGDRTNVCSSTMHITTKLGMNFVHISPKRYQSPQEWVDIANENIKQANSGSVLVTDDLEQVKDADIVYTDLWWWVDQEDEAEERVKAFKPTYQVTPELMKKAGQQALFMHCLPASRNVEVYDEVIDSDQSIAFEQAENRLTAQMGLLVYYLYPQIDKSSNAVKDYYRGKVEAFMEHQDRSWKQRYTYNNDYAETKNKK</sequence>
<evidence type="ECO:0000255" key="1">
    <source>
        <dbReference type="HAMAP-Rule" id="MF_02102"/>
    </source>
</evidence>
<protein>
    <recommendedName>
        <fullName evidence="1">Putrescine carbamoyltransferase</fullName>
        <shortName evidence="1">PTC</shortName>
        <shortName evidence="1">PTCase</shortName>
        <ecNumber evidence="1">2.1.3.6</ecNumber>
    </recommendedName>
    <alternativeName>
        <fullName evidence="1">Putrescine transcarbamoylase</fullName>
    </alternativeName>
    <alternativeName>
        <fullName evidence="1">Putrescine transcarbamylase</fullName>
    </alternativeName>
</protein>
<keyword id="KW-0963">Cytoplasm</keyword>
<keyword id="KW-0620">Polyamine biosynthesis</keyword>
<keyword id="KW-0808">Transferase</keyword>
<reference key="1">
    <citation type="submission" date="2005-09" db="EMBL/GenBank/DDBJ databases">
        <authorList>
            <person name="Glass J.I."/>
            <person name="Lartigue C."/>
            <person name="Pfannkoch C."/>
            <person name="Baden-Tillson H."/>
            <person name="Smith H.O."/>
            <person name="Venter J.C."/>
            <person name="Roske K."/>
            <person name="Wise K.S."/>
            <person name="Calcutt M.J."/>
            <person name="Nelson W.C."/>
            <person name="Nierman W.C."/>
        </authorList>
    </citation>
    <scope>NUCLEOTIDE SEQUENCE [LARGE SCALE GENOMIC DNA]</scope>
    <source>
        <strain>California kid / ATCC 27343 / NCTC 10154</strain>
    </source>
</reference>
<gene>
    <name evidence="1" type="primary">ptcA</name>
    <name type="synonym">argF</name>
    <name type="ordered locus">MCAP_0654</name>
</gene>